<name>SLIRP_MOUSE</name>
<sequence>MAASAIKGLSALRSSTGRPIAFVRKIPWTAAASELREHFAQFGHVRRCTVPFDKETGFHRGMGWVQFSSQEELQNALQQEHHIIDGVKIHVQAQRAKALHGAQTSDEERFLR</sequence>
<gene>
    <name type="primary">Slirp</name>
</gene>
<accession>Q9D8T7</accession>
<accession>Q497G4</accession>
<accession>Q99JH3</accession>
<keyword id="KW-0025">Alternative splicing</keyword>
<keyword id="KW-0496">Mitochondrion</keyword>
<keyword id="KW-0539">Nucleus</keyword>
<keyword id="KW-0597">Phosphoprotein</keyword>
<keyword id="KW-1185">Reference proteome</keyword>
<keyword id="KW-0678">Repressor</keyword>
<keyword id="KW-0694">RNA-binding</keyword>
<keyword id="KW-0804">Transcription</keyword>
<keyword id="KW-0805">Transcription regulation</keyword>
<keyword id="KW-0809">Transit peptide</keyword>
<reference key="1">
    <citation type="submission" date="2000-06" db="EMBL/GenBank/DDBJ databases">
        <title>Full length sequencing of some human and murine muscular transcripts (Telethon Italy project B41).</title>
        <authorList>
            <person name="Ievolella C."/>
            <person name="Zara I."/>
            <person name="Millino C."/>
            <person name="Faulkner G."/>
            <person name="Lanfranchi G."/>
        </authorList>
    </citation>
    <scope>NUCLEOTIDE SEQUENCE [LARGE SCALE MRNA] (ISOFORM 2)</scope>
    <source>
        <tissue>Skeletal muscle</tissue>
    </source>
</reference>
<reference key="2">
    <citation type="journal article" date="2005" name="Science">
        <title>The transcriptional landscape of the mammalian genome.</title>
        <authorList>
            <person name="Carninci P."/>
            <person name="Kasukawa T."/>
            <person name="Katayama S."/>
            <person name="Gough J."/>
            <person name="Frith M.C."/>
            <person name="Maeda N."/>
            <person name="Oyama R."/>
            <person name="Ravasi T."/>
            <person name="Lenhard B."/>
            <person name="Wells C."/>
            <person name="Kodzius R."/>
            <person name="Shimokawa K."/>
            <person name="Bajic V.B."/>
            <person name="Brenner S.E."/>
            <person name="Batalov S."/>
            <person name="Forrest A.R."/>
            <person name="Zavolan M."/>
            <person name="Davis M.J."/>
            <person name="Wilming L.G."/>
            <person name="Aidinis V."/>
            <person name="Allen J.E."/>
            <person name="Ambesi-Impiombato A."/>
            <person name="Apweiler R."/>
            <person name="Aturaliya R.N."/>
            <person name="Bailey T.L."/>
            <person name="Bansal M."/>
            <person name="Baxter L."/>
            <person name="Beisel K.W."/>
            <person name="Bersano T."/>
            <person name="Bono H."/>
            <person name="Chalk A.M."/>
            <person name="Chiu K.P."/>
            <person name="Choudhary V."/>
            <person name="Christoffels A."/>
            <person name="Clutterbuck D.R."/>
            <person name="Crowe M.L."/>
            <person name="Dalla E."/>
            <person name="Dalrymple B.P."/>
            <person name="de Bono B."/>
            <person name="Della Gatta G."/>
            <person name="di Bernardo D."/>
            <person name="Down T."/>
            <person name="Engstrom P."/>
            <person name="Fagiolini M."/>
            <person name="Faulkner G."/>
            <person name="Fletcher C.F."/>
            <person name="Fukushima T."/>
            <person name="Furuno M."/>
            <person name="Futaki S."/>
            <person name="Gariboldi M."/>
            <person name="Georgii-Hemming P."/>
            <person name="Gingeras T.R."/>
            <person name="Gojobori T."/>
            <person name="Green R.E."/>
            <person name="Gustincich S."/>
            <person name="Harbers M."/>
            <person name="Hayashi Y."/>
            <person name="Hensch T.K."/>
            <person name="Hirokawa N."/>
            <person name="Hill D."/>
            <person name="Huminiecki L."/>
            <person name="Iacono M."/>
            <person name="Ikeo K."/>
            <person name="Iwama A."/>
            <person name="Ishikawa T."/>
            <person name="Jakt M."/>
            <person name="Kanapin A."/>
            <person name="Katoh M."/>
            <person name="Kawasawa Y."/>
            <person name="Kelso J."/>
            <person name="Kitamura H."/>
            <person name="Kitano H."/>
            <person name="Kollias G."/>
            <person name="Krishnan S.P."/>
            <person name="Kruger A."/>
            <person name="Kummerfeld S.K."/>
            <person name="Kurochkin I.V."/>
            <person name="Lareau L.F."/>
            <person name="Lazarevic D."/>
            <person name="Lipovich L."/>
            <person name="Liu J."/>
            <person name="Liuni S."/>
            <person name="McWilliam S."/>
            <person name="Madan Babu M."/>
            <person name="Madera M."/>
            <person name="Marchionni L."/>
            <person name="Matsuda H."/>
            <person name="Matsuzawa S."/>
            <person name="Miki H."/>
            <person name="Mignone F."/>
            <person name="Miyake S."/>
            <person name="Morris K."/>
            <person name="Mottagui-Tabar S."/>
            <person name="Mulder N."/>
            <person name="Nakano N."/>
            <person name="Nakauchi H."/>
            <person name="Ng P."/>
            <person name="Nilsson R."/>
            <person name="Nishiguchi S."/>
            <person name="Nishikawa S."/>
            <person name="Nori F."/>
            <person name="Ohara O."/>
            <person name="Okazaki Y."/>
            <person name="Orlando V."/>
            <person name="Pang K.C."/>
            <person name="Pavan W.J."/>
            <person name="Pavesi G."/>
            <person name="Pesole G."/>
            <person name="Petrovsky N."/>
            <person name="Piazza S."/>
            <person name="Reed J."/>
            <person name="Reid J.F."/>
            <person name="Ring B.Z."/>
            <person name="Ringwald M."/>
            <person name="Rost B."/>
            <person name="Ruan Y."/>
            <person name="Salzberg S.L."/>
            <person name="Sandelin A."/>
            <person name="Schneider C."/>
            <person name="Schoenbach C."/>
            <person name="Sekiguchi K."/>
            <person name="Semple C.A."/>
            <person name="Seno S."/>
            <person name="Sessa L."/>
            <person name="Sheng Y."/>
            <person name="Shibata Y."/>
            <person name="Shimada H."/>
            <person name="Shimada K."/>
            <person name="Silva D."/>
            <person name="Sinclair B."/>
            <person name="Sperling S."/>
            <person name="Stupka E."/>
            <person name="Sugiura K."/>
            <person name="Sultana R."/>
            <person name="Takenaka Y."/>
            <person name="Taki K."/>
            <person name="Tammoja K."/>
            <person name="Tan S.L."/>
            <person name="Tang S."/>
            <person name="Taylor M.S."/>
            <person name="Tegner J."/>
            <person name="Teichmann S.A."/>
            <person name="Ueda H.R."/>
            <person name="van Nimwegen E."/>
            <person name="Verardo R."/>
            <person name="Wei C.L."/>
            <person name="Yagi K."/>
            <person name="Yamanishi H."/>
            <person name="Zabarovsky E."/>
            <person name="Zhu S."/>
            <person name="Zimmer A."/>
            <person name="Hide W."/>
            <person name="Bult C."/>
            <person name="Grimmond S.M."/>
            <person name="Teasdale R.D."/>
            <person name="Liu E.T."/>
            <person name="Brusic V."/>
            <person name="Quackenbush J."/>
            <person name="Wahlestedt C."/>
            <person name="Mattick J.S."/>
            <person name="Hume D.A."/>
            <person name="Kai C."/>
            <person name="Sasaki D."/>
            <person name="Tomaru Y."/>
            <person name="Fukuda S."/>
            <person name="Kanamori-Katayama M."/>
            <person name="Suzuki M."/>
            <person name="Aoki J."/>
            <person name="Arakawa T."/>
            <person name="Iida J."/>
            <person name="Imamura K."/>
            <person name="Itoh M."/>
            <person name="Kato T."/>
            <person name="Kawaji H."/>
            <person name="Kawagashira N."/>
            <person name="Kawashima T."/>
            <person name="Kojima M."/>
            <person name="Kondo S."/>
            <person name="Konno H."/>
            <person name="Nakano K."/>
            <person name="Ninomiya N."/>
            <person name="Nishio T."/>
            <person name="Okada M."/>
            <person name="Plessy C."/>
            <person name="Shibata K."/>
            <person name="Shiraki T."/>
            <person name="Suzuki S."/>
            <person name="Tagami M."/>
            <person name="Waki K."/>
            <person name="Watahiki A."/>
            <person name="Okamura-Oho Y."/>
            <person name="Suzuki H."/>
            <person name="Kawai J."/>
            <person name="Hayashizaki Y."/>
        </authorList>
    </citation>
    <scope>NUCLEOTIDE SEQUENCE [LARGE SCALE MRNA] (ISOFORM 1)</scope>
    <source>
        <strain>C57BL/6J</strain>
        <tissue>Pancreas</tissue>
    </source>
</reference>
<reference key="3">
    <citation type="journal article" date="2004" name="Genome Res.">
        <title>The status, quality, and expansion of the NIH full-length cDNA project: the Mammalian Gene Collection (MGC).</title>
        <authorList>
            <consortium name="The MGC Project Team"/>
        </authorList>
    </citation>
    <scope>NUCLEOTIDE SEQUENCE [LARGE SCALE MRNA] OF 2-112 (ISOFORM 1)</scope>
    <source>
        <tissue>Pancreas</tissue>
    </source>
</reference>
<reference key="4">
    <citation type="journal article" date="2009" name="Mol. Cell. Proteomics">
        <title>Large scale localization of protein phosphorylation by use of electron capture dissociation mass spectrometry.</title>
        <authorList>
            <person name="Sweet S.M."/>
            <person name="Bailey C.M."/>
            <person name="Cunningham D.L."/>
            <person name="Heath J.K."/>
            <person name="Cooper H.J."/>
        </authorList>
    </citation>
    <scope>PHOSPHORYLATION [LARGE SCALE ANALYSIS] AT THR-104 AND SER-105</scope>
    <scope>IDENTIFICATION BY MASS SPECTROMETRY [LARGE SCALE ANALYSIS]</scope>
    <source>
        <tissue>Embryonic fibroblast</tissue>
    </source>
</reference>
<reference key="5">
    <citation type="journal article" date="2010" name="Cell">
        <title>A tissue-specific atlas of mouse protein phosphorylation and expression.</title>
        <authorList>
            <person name="Huttlin E.L."/>
            <person name="Jedrychowski M.P."/>
            <person name="Elias J.E."/>
            <person name="Goswami T."/>
            <person name="Rad R."/>
            <person name="Beausoleil S.A."/>
            <person name="Villen J."/>
            <person name="Haas W."/>
            <person name="Sowa M.E."/>
            <person name="Gygi S.P."/>
        </authorList>
    </citation>
    <scope>IDENTIFICATION BY MASS SPECTROMETRY [LARGE SCALE ANALYSIS]</scope>
    <source>
        <tissue>Brain</tissue>
        <tissue>Brown adipose tissue</tissue>
        <tissue>Heart</tissue>
        <tissue>Kidney</tissue>
        <tissue>Liver</tissue>
        <tissue>Pancreas</tissue>
        <tissue>Testis</tissue>
    </source>
</reference>
<feature type="transit peptide" description="Mitochondrion" evidence="3">
    <location>
        <begin position="1"/>
        <end status="unknown"/>
    </location>
</feature>
<feature type="chain" id="PRO_0000247052" description="SRA stem-loop-interacting RNA-binding protein, mitochondrial">
    <location>
        <begin status="unknown"/>
        <end position="112"/>
    </location>
</feature>
<feature type="domain" description="RRM" evidence="4">
    <location>
        <begin position="19"/>
        <end position="98"/>
    </location>
</feature>
<feature type="modified residue" description="Phosphoserine" evidence="2">
    <location>
        <position position="15"/>
    </location>
</feature>
<feature type="modified residue" description="Phosphothreonine" evidence="7">
    <location>
        <position position="104"/>
    </location>
</feature>
<feature type="modified residue" description="Phosphoserine" evidence="7">
    <location>
        <position position="105"/>
    </location>
</feature>
<feature type="splice variant" id="VSP_019907" description="In isoform 2." evidence="5">
    <original>IHVQAQRAKALHGAQTSDEERFLR</original>
    <variation>VSISDVCSTSL</variation>
    <location>
        <begin position="89"/>
        <end position="112"/>
    </location>
</feature>
<feature type="sequence conflict" description="In Ref. 2; BAB25197." evidence="6" ref="2">
    <original>P</original>
    <variation>H</variation>
    <location>
        <position position="51"/>
    </location>
</feature>
<evidence type="ECO:0000250" key="1"/>
<evidence type="ECO:0000250" key="2">
    <source>
        <dbReference type="UniProtKB" id="Q9GZT3"/>
    </source>
</evidence>
<evidence type="ECO:0000255" key="3"/>
<evidence type="ECO:0000255" key="4">
    <source>
        <dbReference type="PROSITE-ProRule" id="PRU00176"/>
    </source>
</evidence>
<evidence type="ECO:0000303" key="5">
    <source ref="1"/>
</evidence>
<evidence type="ECO:0000305" key="6"/>
<evidence type="ECO:0007744" key="7">
    <source>
    </source>
</evidence>
<comment type="function">
    <text evidence="1">RNA-binding protein that acts as a nuclear receptor corepressor. Probably acts by binding the SRA RNA, and repressing the SRA-mediated nuclear receptor coactivation. Binds the STR7 loop of SRA RNA. Also able to repress glucocorticoid (GR), androgen (AR), thyroid (TR) and VDR-mediated transactivation (By similarity).</text>
</comment>
<comment type="subcellular location">
    <subcellularLocation>
        <location evidence="1">Mitochondrion</location>
    </subcellularLocation>
    <subcellularLocation>
        <location evidence="1">Nucleus</location>
    </subcellularLocation>
    <text evidence="1">Predominantly mitochondrial. Some fraction is nuclear. In the nucleus, it is recruited to nuclear receptor target promoters (By similarity).</text>
</comment>
<comment type="alternative products">
    <event type="alternative splicing"/>
    <isoform>
        <id>Q9D8T7-1</id>
        <name>1</name>
        <sequence type="displayed"/>
    </isoform>
    <isoform>
        <id>Q9D8T7-2</id>
        <name>2</name>
        <sequence type="described" ref="VSP_019907"/>
    </isoform>
</comment>
<comment type="sequence caution" evidence="6">
    <conflict type="frameshift">
        <sequence resource="EMBL-CDS" id="CAC34586"/>
    </conflict>
</comment>
<proteinExistence type="evidence at protein level"/>
<dbReference type="EMBL" id="AJ293625">
    <property type="protein sequence ID" value="CAC34586.1"/>
    <property type="status" value="ALT_FRAME"/>
    <property type="molecule type" value="mRNA"/>
</dbReference>
<dbReference type="EMBL" id="AK007699">
    <property type="protein sequence ID" value="BAB25197.1"/>
    <property type="molecule type" value="mRNA"/>
</dbReference>
<dbReference type="EMBL" id="BC100567">
    <property type="protein sequence ID" value="AAI00568.1"/>
    <property type="molecule type" value="mRNA"/>
</dbReference>
<dbReference type="CCDS" id="CCDS36503.1">
    <molecule id="Q9D8T7-1"/>
</dbReference>
<dbReference type="RefSeq" id="NP_081234.2">
    <molecule id="Q9D8T7-1"/>
    <property type="nucleotide sequence ID" value="NM_026958.3"/>
</dbReference>
<dbReference type="SMR" id="Q9D8T7"/>
<dbReference type="BioGRID" id="237642">
    <property type="interactions" value="7"/>
</dbReference>
<dbReference type="FunCoup" id="Q9D8T7">
    <property type="interactions" value="1671"/>
</dbReference>
<dbReference type="IntAct" id="Q9D8T7">
    <property type="interactions" value="1"/>
</dbReference>
<dbReference type="MINT" id="Q9D8T7"/>
<dbReference type="STRING" id="10090.ENSMUSP00000125341"/>
<dbReference type="GlyGen" id="Q9D8T7">
    <property type="glycosylation" value="1 site, 1 O-linked glycan (1 site)"/>
</dbReference>
<dbReference type="iPTMnet" id="Q9D8T7"/>
<dbReference type="PhosphoSitePlus" id="Q9D8T7"/>
<dbReference type="SwissPalm" id="Q9D8T7"/>
<dbReference type="jPOST" id="Q9D8T7"/>
<dbReference type="PaxDb" id="10090-ENSMUSP00000125341"/>
<dbReference type="PeptideAtlas" id="Q9D8T7"/>
<dbReference type="ProteomicsDB" id="257196">
    <molecule id="Q9D8T7-1"/>
</dbReference>
<dbReference type="ProteomicsDB" id="257197">
    <molecule id="Q9D8T7-2"/>
</dbReference>
<dbReference type="Pumba" id="Q9D8T7"/>
<dbReference type="Antibodypedia" id="13187">
    <property type="antibodies" value="128 antibodies from 21 providers"/>
</dbReference>
<dbReference type="DNASU" id="380773"/>
<dbReference type="Ensembl" id="ENSMUST00000160488.8">
    <molecule id="Q9D8T7-2"/>
    <property type="protein sequence ID" value="ENSMUSP00000124174.2"/>
    <property type="gene ID" value="ENSMUSG00000021040.16"/>
</dbReference>
<dbReference type="Ensembl" id="ENSMUST00000161023.8">
    <molecule id="Q9D8T7-1"/>
    <property type="protein sequence ID" value="ENSMUSP00000125341.2"/>
    <property type="gene ID" value="ENSMUSG00000021040.16"/>
</dbReference>
<dbReference type="GeneID" id="380773"/>
<dbReference type="KEGG" id="mmu:380773"/>
<dbReference type="UCSC" id="uc007ojd.2">
    <molecule id="Q9D8T7-1"/>
    <property type="organism name" value="mouse"/>
</dbReference>
<dbReference type="UCSC" id="uc007oje.2">
    <molecule id="Q9D8T7-2"/>
    <property type="organism name" value="mouse"/>
</dbReference>
<dbReference type="AGR" id="MGI:1916394"/>
<dbReference type="CTD" id="81892"/>
<dbReference type="MGI" id="MGI:1916394">
    <property type="gene designation" value="Slirp"/>
</dbReference>
<dbReference type="VEuPathDB" id="HostDB:ENSMUSG00000021040"/>
<dbReference type="eggNOG" id="KOG0118">
    <property type="taxonomic scope" value="Eukaryota"/>
</dbReference>
<dbReference type="GeneTree" id="ENSGT00390000008624"/>
<dbReference type="HOGENOM" id="CLU_012062_28_10_1"/>
<dbReference type="InParanoid" id="Q9D8T7"/>
<dbReference type="OMA" id="GFVMFSQ"/>
<dbReference type="OrthoDB" id="6159137at2759"/>
<dbReference type="PhylomeDB" id="Q9D8T7"/>
<dbReference type="TreeFam" id="TF319527"/>
<dbReference type="BioGRID-ORCS" id="380773">
    <property type="hits" value="1 hit in 77 CRISPR screens"/>
</dbReference>
<dbReference type="ChiTaRS" id="Slirp">
    <property type="organism name" value="mouse"/>
</dbReference>
<dbReference type="PRO" id="PR:Q9D8T7"/>
<dbReference type="Proteomes" id="UP000000589">
    <property type="component" value="Chromosome 12"/>
</dbReference>
<dbReference type="RNAct" id="Q9D8T7">
    <property type="molecule type" value="protein"/>
</dbReference>
<dbReference type="Bgee" id="ENSMUSG00000021040">
    <property type="expression patterns" value="Expressed in facial nucleus and 268 other cell types or tissues"/>
</dbReference>
<dbReference type="ExpressionAtlas" id="Q9D8T7">
    <property type="expression patterns" value="baseline and differential"/>
</dbReference>
<dbReference type="GO" id="GO:0001669">
    <property type="term" value="C:acrosomal vesicle"/>
    <property type="evidence" value="ECO:0000314"/>
    <property type="project" value="MGI"/>
</dbReference>
<dbReference type="GO" id="GO:0005737">
    <property type="term" value="C:cytoplasm"/>
    <property type="evidence" value="ECO:0000314"/>
    <property type="project" value="MGI"/>
</dbReference>
<dbReference type="GO" id="GO:0005759">
    <property type="term" value="C:mitochondrial matrix"/>
    <property type="evidence" value="ECO:0007669"/>
    <property type="project" value="Ensembl"/>
</dbReference>
<dbReference type="GO" id="GO:0005739">
    <property type="term" value="C:mitochondrion"/>
    <property type="evidence" value="ECO:0000314"/>
    <property type="project" value="MGI"/>
</dbReference>
<dbReference type="GO" id="GO:0005634">
    <property type="term" value="C:nucleus"/>
    <property type="evidence" value="ECO:0007669"/>
    <property type="project" value="UniProtKB-SubCell"/>
</dbReference>
<dbReference type="GO" id="GO:0048471">
    <property type="term" value="C:perinuclear region of cytoplasm"/>
    <property type="evidence" value="ECO:0000314"/>
    <property type="project" value="MGI"/>
</dbReference>
<dbReference type="GO" id="GO:1990904">
    <property type="term" value="C:ribonucleoprotein complex"/>
    <property type="evidence" value="ECO:0000314"/>
    <property type="project" value="MGI"/>
</dbReference>
<dbReference type="GO" id="GO:0036126">
    <property type="term" value="C:sperm flagellum"/>
    <property type="evidence" value="ECO:0000314"/>
    <property type="project" value="MGI"/>
</dbReference>
<dbReference type="GO" id="GO:0003723">
    <property type="term" value="F:RNA binding"/>
    <property type="evidence" value="ECO:0007669"/>
    <property type="project" value="UniProtKB-KW"/>
</dbReference>
<dbReference type="GO" id="GO:0030317">
    <property type="term" value="P:flagellated sperm motility"/>
    <property type="evidence" value="ECO:0000315"/>
    <property type="project" value="MGI"/>
</dbReference>
<dbReference type="GO" id="GO:0007005">
    <property type="term" value="P:mitochondrion organization"/>
    <property type="evidence" value="ECO:0000315"/>
    <property type="project" value="MGI"/>
</dbReference>
<dbReference type="GO" id="GO:0000961">
    <property type="term" value="P:negative regulation of mitochondrial RNA catabolic process"/>
    <property type="evidence" value="ECO:0000316"/>
    <property type="project" value="MGI"/>
</dbReference>
<dbReference type="GO" id="GO:0007338">
    <property type="term" value="P:single fertilization"/>
    <property type="evidence" value="ECO:0000315"/>
    <property type="project" value="MGI"/>
</dbReference>
<dbReference type="GO" id="GO:0007286">
    <property type="term" value="P:spermatid development"/>
    <property type="evidence" value="ECO:0000315"/>
    <property type="project" value="MGI"/>
</dbReference>
<dbReference type="CDD" id="cd12242">
    <property type="entry name" value="RRM_SLIRP"/>
    <property type="match status" value="1"/>
</dbReference>
<dbReference type="FunFam" id="3.30.70.330:FF:000392">
    <property type="entry name" value="SRA stem-loop-interacting RNA-binding protein, mitochondrial"/>
    <property type="match status" value="1"/>
</dbReference>
<dbReference type="Gene3D" id="3.30.70.330">
    <property type="match status" value="1"/>
</dbReference>
<dbReference type="InterPro" id="IPR012677">
    <property type="entry name" value="Nucleotide-bd_a/b_plait_sf"/>
</dbReference>
<dbReference type="InterPro" id="IPR035979">
    <property type="entry name" value="RBD_domain_sf"/>
</dbReference>
<dbReference type="InterPro" id="IPR000504">
    <property type="entry name" value="RRM_dom"/>
</dbReference>
<dbReference type="InterPro" id="IPR052462">
    <property type="entry name" value="SLIRP/GR-RBP-like"/>
</dbReference>
<dbReference type="InterPro" id="IPR034152">
    <property type="entry name" value="SLIRP_RRM"/>
</dbReference>
<dbReference type="PANTHER" id="PTHR48027">
    <property type="entry name" value="HETEROGENEOUS NUCLEAR RIBONUCLEOPROTEIN 87F-RELATED"/>
    <property type="match status" value="1"/>
</dbReference>
<dbReference type="Pfam" id="PF00076">
    <property type="entry name" value="RRM_1"/>
    <property type="match status" value="1"/>
</dbReference>
<dbReference type="SMART" id="SM00360">
    <property type="entry name" value="RRM"/>
    <property type="match status" value="1"/>
</dbReference>
<dbReference type="SUPFAM" id="SSF54928">
    <property type="entry name" value="RNA-binding domain, RBD"/>
    <property type="match status" value="1"/>
</dbReference>
<dbReference type="PROSITE" id="PS50102">
    <property type="entry name" value="RRM"/>
    <property type="match status" value="1"/>
</dbReference>
<protein>
    <recommendedName>
        <fullName>SRA stem-loop-interacting RNA-binding protein, mitochondrial</fullName>
    </recommendedName>
</protein>
<organism>
    <name type="scientific">Mus musculus</name>
    <name type="common">Mouse</name>
    <dbReference type="NCBI Taxonomy" id="10090"/>
    <lineage>
        <taxon>Eukaryota</taxon>
        <taxon>Metazoa</taxon>
        <taxon>Chordata</taxon>
        <taxon>Craniata</taxon>
        <taxon>Vertebrata</taxon>
        <taxon>Euteleostomi</taxon>
        <taxon>Mammalia</taxon>
        <taxon>Eutheria</taxon>
        <taxon>Euarchontoglires</taxon>
        <taxon>Glires</taxon>
        <taxon>Rodentia</taxon>
        <taxon>Myomorpha</taxon>
        <taxon>Muroidea</taxon>
        <taxon>Muridae</taxon>
        <taxon>Murinae</taxon>
        <taxon>Mus</taxon>
        <taxon>Mus</taxon>
    </lineage>
</organism>